<keyword id="KW-0067">ATP-binding</keyword>
<keyword id="KW-0436">Ligase</keyword>
<keyword id="KW-0479">Metal-binding</keyword>
<keyword id="KW-0547">Nucleotide-binding</keyword>
<keyword id="KW-0671">Queuosine biosynthesis</keyword>
<keyword id="KW-0862">Zinc</keyword>
<comment type="function">
    <text evidence="1">Catalyzes the ATP-dependent conversion of 7-carboxy-7-deazaguanine (CDG) to 7-cyano-7-deazaguanine (preQ(0)).</text>
</comment>
<comment type="catalytic activity">
    <reaction evidence="1">
        <text>7-carboxy-7-deazaguanine + NH4(+) + ATP = 7-cyano-7-deazaguanine + ADP + phosphate + H2O + H(+)</text>
        <dbReference type="Rhea" id="RHEA:27982"/>
        <dbReference type="ChEBI" id="CHEBI:15377"/>
        <dbReference type="ChEBI" id="CHEBI:15378"/>
        <dbReference type="ChEBI" id="CHEBI:28938"/>
        <dbReference type="ChEBI" id="CHEBI:30616"/>
        <dbReference type="ChEBI" id="CHEBI:43474"/>
        <dbReference type="ChEBI" id="CHEBI:45075"/>
        <dbReference type="ChEBI" id="CHEBI:61036"/>
        <dbReference type="ChEBI" id="CHEBI:456216"/>
        <dbReference type="EC" id="6.3.4.20"/>
    </reaction>
</comment>
<comment type="cofactor">
    <cofactor evidence="1">
        <name>Zn(2+)</name>
        <dbReference type="ChEBI" id="CHEBI:29105"/>
    </cofactor>
    <text evidence="1">Binds 1 zinc ion per subunit.</text>
</comment>
<comment type="pathway">
    <text evidence="1">Purine metabolism; 7-cyano-7-deazaguanine biosynthesis.</text>
</comment>
<comment type="similarity">
    <text evidence="1">Belongs to the QueC family.</text>
</comment>
<name>QUEC_PSEPW</name>
<dbReference type="EC" id="6.3.4.20" evidence="1"/>
<dbReference type="EMBL" id="CP000949">
    <property type="protein sequence ID" value="ACA74469.1"/>
    <property type="molecule type" value="Genomic_DNA"/>
</dbReference>
<dbReference type="SMR" id="B1JD61"/>
<dbReference type="STRING" id="390235.PputW619_3989"/>
<dbReference type="KEGG" id="ppw:PputW619_3989"/>
<dbReference type="eggNOG" id="COG0603">
    <property type="taxonomic scope" value="Bacteria"/>
</dbReference>
<dbReference type="HOGENOM" id="CLU_081854_1_1_6"/>
<dbReference type="OrthoDB" id="9789567at2"/>
<dbReference type="UniPathway" id="UPA00391"/>
<dbReference type="GO" id="GO:0005524">
    <property type="term" value="F:ATP binding"/>
    <property type="evidence" value="ECO:0007669"/>
    <property type="project" value="UniProtKB-UniRule"/>
</dbReference>
<dbReference type="GO" id="GO:0016879">
    <property type="term" value="F:ligase activity, forming carbon-nitrogen bonds"/>
    <property type="evidence" value="ECO:0007669"/>
    <property type="project" value="UniProtKB-UniRule"/>
</dbReference>
<dbReference type="GO" id="GO:0008270">
    <property type="term" value="F:zinc ion binding"/>
    <property type="evidence" value="ECO:0007669"/>
    <property type="project" value="UniProtKB-UniRule"/>
</dbReference>
<dbReference type="GO" id="GO:0008616">
    <property type="term" value="P:queuosine biosynthetic process"/>
    <property type="evidence" value="ECO:0007669"/>
    <property type="project" value="UniProtKB-UniRule"/>
</dbReference>
<dbReference type="CDD" id="cd01995">
    <property type="entry name" value="QueC-like"/>
    <property type="match status" value="1"/>
</dbReference>
<dbReference type="FunFam" id="3.40.50.620:FF:000131">
    <property type="entry name" value="7-cyano-7-deazaguanine synthase"/>
    <property type="match status" value="1"/>
</dbReference>
<dbReference type="Gene3D" id="3.40.50.620">
    <property type="entry name" value="HUPs"/>
    <property type="match status" value="1"/>
</dbReference>
<dbReference type="HAMAP" id="MF_01633">
    <property type="entry name" value="QueC"/>
    <property type="match status" value="1"/>
</dbReference>
<dbReference type="InterPro" id="IPR018317">
    <property type="entry name" value="QueC"/>
</dbReference>
<dbReference type="InterPro" id="IPR014729">
    <property type="entry name" value="Rossmann-like_a/b/a_fold"/>
</dbReference>
<dbReference type="NCBIfam" id="TIGR00364">
    <property type="entry name" value="7-cyano-7-deazaguanine synthase QueC"/>
    <property type="match status" value="1"/>
</dbReference>
<dbReference type="PANTHER" id="PTHR42914">
    <property type="entry name" value="7-CYANO-7-DEAZAGUANINE SYNTHASE"/>
    <property type="match status" value="1"/>
</dbReference>
<dbReference type="PANTHER" id="PTHR42914:SF1">
    <property type="entry name" value="7-CYANO-7-DEAZAGUANINE SYNTHASE"/>
    <property type="match status" value="1"/>
</dbReference>
<dbReference type="Pfam" id="PF06508">
    <property type="entry name" value="QueC"/>
    <property type="match status" value="1"/>
</dbReference>
<dbReference type="PIRSF" id="PIRSF006293">
    <property type="entry name" value="ExsB"/>
    <property type="match status" value="1"/>
</dbReference>
<dbReference type="SUPFAM" id="SSF52402">
    <property type="entry name" value="Adenine nucleotide alpha hydrolases-like"/>
    <property type="match status" value="1"/>
</dbReference>
<evidence type="ECO:0000255" key="1">
    <source>
        <dbReference type="HAMAP-Rule" id="MF_01633"/>
    </source>
</evidence>
<sequence length="224" mass="23990">MTEKRAVILLSGGLDSATVVAMAKAEGYSCYTMSFDYGQRHRAELNAAARVARDLGVVEHKVIGLNLDGIGGSALTDSSIDVPETPGEGIPVTYVPARNTVFLSLALGWAEVLQARDIFIGVNAVDYSGYPDCRPEFVEAFERMANLATKAGVEGQGFRIQAPLQNMSKAQIVQAGMARGVDYSLTVSCYQADDEGRACGKCDSCRLRADGFKAAGVEDPTRYF</sequence>
<organism>
    <name type="scientific">Pseudomonas putida (strain W619)</name>
    <dbReference type="NCBI Taxonomy" id="390235"/>
    <lineage>
        <taxon>Bacteria</taxon>
        <taxon>Pseudomonadati</taxon>
        <taxon>Pseudomonadota</taxon>
        <taxon>Gammaproteobacteria</taxon>
        <taxon>Pseudomonadales</taxon>
        <taxon>Pseudomonadaceae</taxon>
        <taxon>Pseudomonas</taxon>
    </lineage>
</organism>
<proteinExistence type="inferred from homology"/>
<protein>
    <recommendedName>
        <fullName evidence="1">7-cyano-7-deazaguanine synthase</fullName>
        <ecNumber evidence="1">6.3.4.20</ecNumber>
    </recommendedName>
    <alternativeName>
        <fullName evidence="1">7-cyano-7-carbaguanine synthase</fullName>
    </alternativeName>
    <alternativeName>
        <fullName evidence="1">PreQ(0) synthase</fullName>
    </alternativeName>
    <alternativeName>
        <fullName evidence="1">Queuosine biosynthesis protein QueC</fullName>
    </alternativeName>
</protein>
<reference key="1">
    <citation type="submission" date="2008-02" db="EMBL/GenBank/DDBJ databases">
        <title>Complete sequence of Pseudomonas putida W619.</title>
        <authorList>
            <person name="Copeland A."/>
            <person name="Lucas S."/>
            <person name="Lapidus A."/>
            <person name="Barry K."/>
            <person name="Detter J.C."/>
            <person name="Glavina del Rio T."/>
            <person name="Dalin E."/>
            <person name="Tice H."/>
            <person name="Pitluck S."/>
            <person name="Chain P."/>
            <person name="Malfatti S."/>
            <person name="Shin M."/>
            <person name="Vergez L."/>
            <person name="Schmutz J."/>
            <person name="Larimer F."/>
            <person name="Land M."/>
            <person name="Hauser L."/>
            <person name="Kyrpides N."/>
            <person name="Kim E."/>
            <person name="Taghavi S."/>
            <person name="Vangronsveld D."/>
            <person name="van der Lelie D."/>
            <person name="Richardson P."/>
        </authorList>
    </citation>
    <scope>NUCLEOTIDE SEQUENCE [LARGE SCALE GENOMIC DNA]</scope>
    <source>
        <strain>W619</strain>
    </source>
</reference>
<gene>
    <name evidence="1" type="primary">queC</name>
    <name type="ordered locus">PputW619_3989</name>
</gene>
<accession>B1JD61</accession>
<feature type="chain" id="PRO_1000186622" description="7-cyano-7-deazaguanine synthase">
    <location>
        <begin position="1"/>
        <end position="224"/>
    </location>
</feature>
<feature type="binding site" evidence="1">
    <location>
        <begin position="10"/>
        <end position="20"/>
    </location>
    <ligand>
        <name>ATP</name>
        <dbReference type="ChEBI" id="CHEBI:30616"/>
    </ligand>
</feature>
<feature type="binding site" evidence="1">
    <location>
        <position position="189"/>
    </location>
    <ligand>
        <name>Zn(2+)</name>
        <dbReference type="ChEBI" id="CHEBI:29105"/>
    </ligand>
</feature>
<feature type="binding site" evidence="1">
    <location>
        <position position="199"/>
    </location>
    <ligand>
        <name>Zn(2+)</name>
        <dbReference type="ChEBI" id="CHEBI:29105"/>
    </ligand>
</feature>
<feature type="binding site" evidence="1">
    <location>
        <position position="202"/>
    </location>
    <ligand>
        <name>Zn(2+)</name>
        <dbReference type="ChEBI" id="CHEBI:29105"/>
    </ligand>
</feature>
<feature type="binding site" evidence="1">
    <location>
        <position position="205"/>
    </location>
    <ligand>
        <name>Zn(2+)</name>
        <dbReference type="ChEBI" id="CHEBI:29105"/>
    </ligand>
</feature>